<organism>
    <name type="scientific">Drosophila eugracilis</name>
    <name type="common">Fruit fly</name>
    <dbReference type="NCBI Taxonomy" id="29029"/>
    <lineage>
        <taxon>Eukaryota</taxon>
        <taxon>Metazoa</taxon>
        <taxon>Ecdysozoa</taxon>
        <taxon>Arthropoda</taxon>
        <taxon>Hexapoda</taxon>
        <taxon>Insecta</taxon>
        <taxon>Pterygota</taxon>
        <taxon>Neoptera</taxon>
        <taxon>Endopterygota</taxon>
        <taxon>Diptera</taxon>
        <taxon>Brachycera</taxon>
        <taxon>Muscomorpha</taxon>
        <taxon>Ephydroidea</taxon>
        <taxon>Drosophilidae</taxon>
        <taxon>Drosophila</taxon>
        <taxon>Sophophora</taxon>
    </lineage>
</organism>
<gene>
    <name type="primary">Sting</name>
</gene>
<name>STING_DROEU</name>
<protein>
    <recommendedName>
        <fullName>Stimulator of interferon genes protein homolog</fullName>
    </recommendedName>
</protein>
<accession>P0DV10</accession>
<feature type="chain" id="PRO_0000454450" description="Stimulator of interferon genes protein homolog">
    <location>
        <begin position="1"/>
        <end position="345"/>
    </location>
</feature>
<feature type="transmembrane region" description="Helical" evidence="2">
    <location>
        <begin position="90"/>
        <end position="107"/>
    </location>
</feature>
<feature type="transmembrane region" description="Helical" evidence="2">
    <location>
        <begin position="122"/>
        <end position="144"/>
    </location>
</feature>
<feature type="binding site" evidence="4 6">
    <location>
        <position position="159"/>
    </location>
    <ligand>
        <name>3',2'-cGAMP</name>
        <dbReference type="ChEBI" id="CHEBI:177334"/>
    </ligand>
</feature>
<feature type="binding site" evidence="4 6">
    <location>
        <position position="234"/>
    </location>
    <ligand>
        <name>3',2'-cGAMP</name>
        <dbReference type="ChEBI" id="CHEBI:177334"/>
    </ligand>
</feature>
<feature type="binding site" evidence="4 6">
    <location>
        <position position="237"/>
    </location>
    <ligand>
        <name>3',2'-cGAMP</name>
        <dbReference type="ChEBI" id="CHEBI:177334"/>
    </ligand>
</feature>
<feature type="binding site" evidence="4 6">
    <location>
        <position position="257"/>
    </location>
    <ligand>
        <name>3',2'-cGAMP</name>
        <dbReference type="ChEBI" id="CHEBI:177334"/>
    </ligand>
</feature>
<feature type="binding site" evidence="4 6">
    <location>
        <position position="260"/>
    </location>
    <ligand>
        <name>3',2'-cGAMP</name>
        <dbReference type="ChEBI" id="CHEBI:177334"/>
    </ligand>
</feature>
<feature type="binding site" evidence="4 6">
    <location>
        <position position="264"/>
    </location>
    <ligand>
        <name>3',2'-cGAMP</name>
        <dbReference type="ChEBI" id="CHEBI:177334"/>
    </ligand>
</feature>
<feature type="glycosylation site" description="N-linked (GlcNAc...) asparagine" evidence="3">
    <location>
        <position position="88"/>
    </location>
</feature>
<feature type="glycosylation site" description="N-linked (GlcNAc...) asparagine" evidence="3">
    <location>
        <position position="189"/>
    </location>
</feature>
<feature type="glycosylation site" description="N-linked (GlcNAc...) asparagine" evidence="3">
    <location>
        <position position="272"/>
    </location>
</feature>
<feature type="mutagenesis site" description="Reduced ability to recognize and bind 3',2'-cGAMP." evidence="4">
    <original>N</original>
    <variation>S</variation>
    <variation>A</variation>
    <location>
        <position position="159"/>
    </location>
</feature>
<feature type="mutagenesis site" description="Abolished binding to 3',2'-cGAMP and subsequent activation." evidence="4">
    <original>Y</original>
    <variation>A</variation>
    <location>
        <position position="164"/>
    </location>
</feature>
<feature type="mutagenesis site" description="Does not affect binding to 3',2'-cGAMP and subsequent activation." evidence="4">
    <original>Y</original>
    <variation>F</variation>
    <location>
        <position position="164"/>
    </location>
</feature>
<feature type="mutagenesis site" description="Impaired ability to be activated by 3',2'-cGAMP." evidence="4">
    <original>R</original>
    <variation>A</variation>
    <variation>H</variation>
    <location>
        <position position="229"/>
    </location>
</feature>
<feature type="mutagenesis site" description="Impaired binding to 3',2'-cGAMP." evidence="4">
    <original>R</original>
    <variation>A</variation>
    <location>
        <position position="234"/>
    </location>
</feature>
<feature type="mutagenesis site" description="Impaired binding to 3',2'-cGAMP." evidence="4">
    <original>E</original>
    <variation>Q</variation>
    <variation>A</variation>
    <location>
        <position position="257"/>
    </location>
</feature>
<reference key="1">
    <citation type="journal article" date="2021" name="Elife">
        <title>Highly contiguous assemblies of 101 drosophilid genomes.</title>
        <authorList>
            <person name="Kim B.Y."/>
            <person name="Wang J.R."/>
            <person name="Miller D.E."/>
            <person name="Barmina O."/>
            <person name="Delaney E."/>
            <person name="Thompson A."/>
            <person name="Comeault A.A."/>
            <person name="Peede D."/>
            <person name="D'Agostino E.R."/>
            <person name="Pelaez J."/>
            <person name="Aguilar J.M."/>
            <person name="Haji D."/>
            <person name="Matsunaga T."/>
            <person name="Armstrong E.E."/>
            <person name="Zych M."/>
            <person name="Ogawa Y."/>
            <person name="Stamenkovic-Radak M."/>
            <person name="Jelic M."/>
            <person name="Veselinovic M.S."/>
            <person name="Tanaskovic M."/>
            <person name="Eric P."/>
            <person name="Gao J.J."/>
            <person name="Katoh T.K."/>
            <person name="Toda M.J."/>
            <person name="Watabe H."/>
            <person name="Watada M."/>
            <person name="Davis J.S."/>
            <person name="Moyle L.C."/>
            <person name="Manoli G."/>
            <person name="Bertolini E."/>
            <person name="Kostal V."/>
            <person name="Hawley R.S."/>
            <person name="Takahashi A."/>
            <person name="Jones C.D."/>
            <person name="Price D.K."/>
            <person name="Whiteman N."/>
            <person name="Kopp A."/>
            <person name="Matute D.R."/>
            <person name="Petrov D.A."/>
        </authorList>
    </citation>
    <scope>NUCLEOTIDE SEQUENCE [LARGE SCALE GENOMIC DNA]</scope>
</reference>
<reference key="2">
    <citation type="journal article" date="2021" name="Nature">
        <title>cGAS-like receptors sense RNA and control 3'2'-cGAMP signaling in Drosophila.</title>
        <authorList>
            <person name="Slavik K.M."/>
            <person name="Morehouse B.R."/>
            <person name="Ragucci A.E."/>
            <person name="Zhou W."/>
            <person name="Ai X."/>
            <person name="Chen Y."/>
            <person name="Li L."/>
            <person name="Wei Z."/>
            <person name="Baehre H."/>
            <person name="Koenig M."/>
            <person name="Seifert R."/>
            <person name="Lee A.S.Y."/>
            <person name="Cai H."/>
            <person name="Imler J.L."/>
            <person name="Kranzusch P.J."/>
        </authorList>
    </citation>
    <scope>X-RAY CRYSTALLOGRAPHY (1.84 ANGSTROMS) OF 150-340 IN COMPLEX WITH 3'2'-CGAMP</scope>
    <scope>FUNCTION</scope>
    <scope>3',2'-CGAMP-BINDING</scope>
    <scope>MUTAGENESIS OF ASN-159; TYR-164; ARG-229; ARG-234 AND GLU-257</scope>
</reference>
<proteinExistence type="evidence at protein level"/>
<evidence type="ECO:0000250" key="1">
    <source>
        <dbReference type="UniProtKB" id="A0A0B4LFY9"/>
    </source>
</evidence>
<evidence type="ECO:0000255" key="2"/>
<evidence type="ECO:0000255" key="3">
    <source>
        <dbReference type="PROSITE-ProRule" id="PRU00498"/>
    </source>
</evidence>
<evidence type="ECO:0000269" key="4">
    <source>
    </source>
</evidence>
<evidence type="ECO:0000305" key="5"/>
<evidence type="ECO:0007744" key="6">
    <source>
        <dbReference type="PDB" id="7MWZ"/>
    </source>
</evidence>
<sequence length="345" mass="40278">MIKEMAIANNADEVDNEVRAEKGRKCFYLKKMIGDYIGNTVRIVATVVLADFLQRLYRSVVEYVHCSKYYLPEDRLWTILRRSCTYSNKSRYLVMGFILIGFLRISVSGNYKDVVPTFKFLAYMPLYWIFSNLGHSTLTYSSWVRDSHGLDYAAGMASNYFHGYLKLSLPERKADGLLHRMNVYEDKYNVTFGIKRLIILIPDEMFINGVIQSRILEKATPLETQFINRAGVNRPFKHAVYRLAEKVNGKTYYFAMEGATPMLSFFEAMHSNFSATWQMKELKREIWLKFYTHLNELIKTWPETRNLVELIIYNSHDTKGDLVDVGEMLKSHMELKTKNIDEMIG</sequence>
<dbReference type="PDB" id="7MWY">
    <property type="method" value="X-ray"/>
    <property type="resolution" value="1.84 A"/>
    <property type="chains" value="A=150-340"/>
</dbReference>
<dbReference type="PDB" id="7MWZ">
    <property type="method" value="X-ray"/>
    <property type="resolution" value="2.00 A"/>
    <property type="chains" value="A=1-345"/>
</dbReference>
<dbReference type="PDBsum" id="7MWY"/>
<dbReference type="PDBsum" id="7MWZ"/>
<dbReference type="SMR" id="P0DV10"/>
<dbReference type="GlyCosmos" id="P0DV10">
    <property type="glycosylation" value="3 sites, No reported glycans"/>
</dbReference>
<dbReference type="EnsemblMetazoa" id="XM_017211184.2">
    <property type="protein sequence ID" value="XP_017066673.1"/>
    <property type="gene ID" value="LOC108104862"/>
</dbReference>
<dbReference type="GeneID" id="108104862"/>
<dbReference type="CTD" id="36016"/>
<dbReference type="OrthoDB" id="6053839at2759"/>
<dbReference type="GO" id="GO:0005776">
    <property type="term" value="C:autophagosome"/>
    <property type="evidence" value="ECO:0007669"/>
    <property type="project" value="TreeGrafter"/>
</dbReference>
<dbReference type="GO" id="GO:0005789">
    <property type="term" value="C:endoplasmic reticulum membrane"/>
    <property type="evidence" value="ECO:0007669"/>
    <property type="project" value="UniProtKB-SubCell"/>
</dbReference>
<dbReference type="GO" id="GO:0061507">
    <property type="term" value="F:2',3'-cyclic GMP-AMP binding"/>
    <property type="evidence" value="ECO:0007669"/>
    <property type="project" value="TreeGrafter"/>
</dbReference>
<dbReference type="GO" id="GO:0140704">
    <property type="term" value="F:3',2'-cyclic GMP-AMP binding"/>
    <property type="evidence" value="ECO:0000314"/>
    <property type="project" value="UniProtKB"/>
</dbReference>
<dbReference type="GO" id="GO:0035438">
    <property type="term" value="F:cyclic-di-GMP binding"/>
    <property type="evidence" value="ECO:0007669"/>
    <property type="project" value="InterPro"/>
</dbReference>
<dbReference type="GO" id="GO:0002218">
    <property type="term" value="P:activation of innate immune response"/>
    <property type="evidence" value="ECO:0000314"/>
    <property type="project" value="UniProtKB"/>
</dbReference>
<dbReference type="GO" id="GO:0000045">
    <property type="term" value="P:autophagosome assembly"/>
    <property type="evidence" value="ECO:0007669"/>
    <property type="project" value="TreeGrafter"/>
</dbReference>
<dbReference type="GO" id="GO:0051607">
    <property type="term" value="P:defense response to virus"/>
    <property type="evidence" value="ECO:0000314"/>
    <property type="project" value="UniProtKB"/>
</dbReference>
<dbReference type="GO" id="GO:0045087">
    <property type="term" value="P:innate immune response"/>
    <property type="evidence" value="ECO:0007669"/>
    <property type="project" value="UniProtKB-KW"/>
</dbReference>
<dbReference type="GO" id="GO:0016239">
    <property type="term" value="P:positive regulation of macroautophagy"/>
    <property type="evidence" value="ECO:0007669"/>
    <property type="project" value="TreeGrafter"/>
</dbReference>
<dbReference type="GO" id="GO:0061059">
    <property type="term" value="P:positive regulation of peptidoglycan recognition protein signaling pathway"/>
    <property type="evidence" value="ECO:0000314"/>
    <property type="project" value="UniProtKB"/>
</dbReference>
<dbReference type="GO" id="GO:0032481">
    <property type="term" value="P:positive regulation of type I interferon production"/>
    <property type="evidence" value="ECO:0007669"/>
    <property type="project" value="InterPro"/>
</dbReference>
<dbReference type="GO" id="GO:0061709">
    <property type="term" value="P:reticulophagy"/>
    <property type="evidence" value="ECO:0007669"/>
    <property type="project" value="TreeGrafter"/>
</dbReference>
<dbReference type="CDD" id="cd12146">
    <property type="entry name" value="STING_C"/>
    <property type="match status" value="1"/>
</dbReference>
<dbReference type="Gene3D" id="3.40.50.12100">
    <property type="entry name" value="Stimulator of interferon genes protein"/>
    <property type="match status" value="1"/>
</dbReference>
<dbReference type="InterPro" id="IPR029158">
    <property type="entry name" value="STING"/>
</dbReference>
<dbReference type="InterPro" id="IPR033952">
    <property type="entry name" value="STING_C"/>
</dbReference>
<dbReference type="InterPro" id="IPR038623">
    <property type="entry name" value="STING_C_sf"/>
</dbReference>
<dbReference type="InterPro" id="IPR055432">
    <property type="entry name" value="STING_LBD"/>
</dbReference>
<dbReference type="InterPro" id="IPR055434">
    <property type="entry name" value="STING_TM"/>
</dbReference>
<dbReference type="PANTHER" id="PTHR34339">
    <property type="entry name" value="STIMULATOR OF INTERFERON GENES PROTEIN"/>
    <property type="match status" value="1"/>
</dbReference>
<dbReference type="PANTHER" id="PTHR34339:SF1">
    <property type="entry name" value="STIMULATOR OF INTERFERON GENES PROTEIN"/>
    <property type="match status" value="1"/>
</dbReference>
<dbReference type="Pfam" id="PF15009">
    <property type="entry name" value="STING_LBD"/>
    <property type="match status" value="1"/>
</dbReference>
<dbReference type="Pfam" id="PF23417">
    <property type="entry name" value="STING_TM"/>
    <property type="match status" value="1"/>
</dbReference>
<keyword id="KW-0002">3D-structure</keyword>
<keyword id="KW-0051">Antiviral defense</keyword>
<keyword id="KW-0256">Endoplasmic reticulum</keyword>
<keyword id="KW-0325">Glycoprotein</keyword>
<keyword id="KW-0391">Immunity</keyword>
<keyword id="KW-0399">Innate immunity</keyword>
<keyword id="KW-0472">Membrane</keyword>
<keyword id="KW-0547">Nucleotide-binding</keyword>
<keyword id="KW-0812">Transmembrane</keyword>
<keyword id="KW-1133">Transmembrane helix</keyword>
<comment type="function">
    <text evidence="1 4">Facilitator of innate immune signaling that binds cyclic dinucleotides produced in response to infection by bacteria and/or viruses, and promotes the activation of the NF-kappa-B transcription factor Rel (Relish) (PubMed:34261127). Recognizes and binds cyclic di-GMP (c-di-GMP), a cyclic dinucleotide messenger produced by bacteria such as L.monocytogenes, leading to activation of the peptidoglycan recognition protein (IMD) signaling pathway and activation of Rel (Relish) (By similarity). Innate immune response is triggered in response to double-stranded RNA from viruses delivered to the cytoplasm: Sting acts by specifically binding cyclic dinucleotides 3',2'-cGAMP and 2',3'-cGAMP produced by cGLR1 and cGLR2 in response to RNA virus in the cytosol (PubMed:34261127). Has a strong preference for 3',2'-cGAMP compared to other cyclic dinucleotides such as 2',3'-cGAMP or 3'3'-c-di-GMP (PubMed:34261127). Upon binding to 3',2'-cGAMP, activates an antiviral immune response, leading to the activation of Rel (Relish) (PubMed:34261127). Activated in brain in response to Zika virus infection, leading to autophagy (By similarity).</text>
</comment>
<comment type="subcellular location">
    <subcellularLocation>
        <location evidence="1">Endoplasmic reticulum membrane</location>
        <topology evidence="2">Multi-pass membrane protein</topology>
    </subcellularLocation>
</comment>
<comment type="similarity">
    <text evidence="5">Belongs to the STING family.</text>
</comment>